<evidence type="ECO:0000250" key="1"/>
<evidence type="ECO:0000256" key="2">
    <source>
        <dbReference type="SAM" id="MobiDB-lite"/>
    </source>
</evidence>
<evidence type="ECO:0000305" key="3"/>
<protein>
    <recommendedName>
        <fullName>3-isopropylmalate dehydratase</fullName>
        <ecNumber>4.2.1.33</ecNumber>
    </recommendedName>
    <alternativeName>
        <fullName>Alpha-IPM isomerase</fullName>
        <shortName>IPMI</shortName>
    </alternativeName>
    <alternativeName>
        <fullName>Isopropylmalate isomerase</fullName>
    </alternativeName>
</protein>
<sequence>MGRTLYDKVWDDHVVDQQEDGTCLIYIDRHLVHEVTSPQAFEGLRNAGRKVRRPDCTLATVDHNIPTTPRKNFKNVSTFIQEADSRTQCETLEHNVKEFGLTYFGMDDSRQGIVHVIGPEQGFTLPGCTVNCGDSHTSTHGAFGALAFGIGTSEVEHVLATQTLLQKKSKNMRVKVDGKLAPGVTSKDIVLHIIGVIGTAGGTGCVIEFCGSAFEQMSMEARMSVCNMSIEAGARAGMIAPDETTFEYIRGRPLAPTGAEWDKAVEYWRSLRSDPDAKYDVDVFIDAADIAPTLTWGTSPQDVVAITGTTPDPSTVSDPIRRQAMERALDYIGLKPNTPMQEVKIDKVFIGSCTNSRIEDLRAAAAIAKGRHVADWVYAMVVPGSGLVKKQAEQEGLDRIFKEAGFDWREAGCSMCLGMNPDQLKPGERCASTSNRNFEGRQGAGGRTHLMSPAMAAAAAVTGYFTDVRKLTPAQQDRPASPTPKKIETELEPPVEDHAKAADQADIVTDAPATGASPPSPAPSDAAGMPKFTTLRGYAAPLDIANVDTDMIIPKQFLKTIKRTGLGTALFYNIRFDGATGEENPDFVLNQEPYRQSRILVCTGPNFGCGSSREHAPWAFNDFGIRSIIAPSFADIFFNNCFKNGMLPITLPQDKVEMLAEHAKQKAELEVDLVNQVVRYPGGEVPFDVEPFRKHCLVNGLDDIGLTMQKADLIEAFEAKRSQTWPWLDGKDYAGKATKFTPVATNTAKKQKLDW</sequence>
<comment type="function">
    <text>Catalyzes the isomerization between 2-isopropylmalate and 3-isopropylmalate, via the formation of 2-isopropylmaleate.</text>
</comment>
<comment type="catalytic activity">
    <reaction>
        <text>(2R,3S)-3-isopropylmalate = (2S)-2-isopropylmalate</text>
        <dbReference type="Rhea" id="RHEA:32287"/>
        <dbReference type="ChEBI" id="CHEBI:1178"/>
        <dbReference type="ChEBI" id="CHEBI:35121"/>
        <dbReference type="EC" id="4.2.1.33"/>
    </reaction>
</comment>
<comment type="cofactor">
    <cofactor evidence="1">
        <name>[4Fe-4S] cluster</name>
        <dbReference type="ChEBI" id="CHEBI:49883"/>
    </cofactor>
    <text evidence="1">Binds 1 [4Fe-4S] cluster per subunit.</text>
</comment>
<comment type="pathway">
    <text>Amino-acid biosynthesis; L-leucine biosynthesis; L-leucine from 3-methyl-2-oxobutanoate: step 2/4.</text>
</comment>
<comment type="subunit">
    <text evidence="1">Monomer.</text>
</comment>
<comment type="similarity">
    <text evidence="3">Belongs to the aconitase/IPM isomerase family.</text>
</comment>
<reference key="1">
    <citation type="journal article" date="1996" name="Appl. Microbiol. Biotechnol.">
        <title>Integrative transformation of the zygomycete Rhizomucor pusillus by homologous recombination.</title>
        <authorList>
            <person name="Wada M."/>
            <person name="Beppu T."/>
            <person name="Horinouchi S."/>
        </authorList>
    </citation>
    <scope>NUCLEOTIDE SEQUENCE [GENOMIC DNA]</scope>
</reference>
<dbReference type="EC" id="4.2.1.33"/>
<dbReference type="EMBL" id="D67033">
    <property type="protein sequence ID" value="BAA11052.1"/>
    <property type="molecule type" value="Genomic_DNA"/>
</dbReference>
<dbReference type="SMR" id="P55251"/>
<dbReference type="UniPathway" id="UPA00048">
    <property type="reaction ID" value="UER00071"/>
</dbReference>
<dbReference type="GO" id="GO:0009316">
    <property type="term" value="C:3-isopropylmalate dehydratase complex"/>
    <property type="evidence" value="ECO:0007669"/>
    <property type="project" value="InterPro"/>
</dbReference>
<dbReference type="GO" id="GO:0003861">
    <property type="term" value="F:3-isopropylmalate dehydratase activity"/>
    <property type="evidence" value="ECO:0007669"/>
    <property type="project" value="UniProtKB-EC"/>
</dbReference>
<dbReference type="GO" id="GO:0051539">
    <property type="term" value="F:4 iron, 4 sulfur cluster binding"/>
    <property type="evidence" value="ECO:0007669"/>
    <property type="project" value="UniProtKB-KW"/>
</dbReference>
<dbReference type="GO" id="GO:0046872">
    <property type="term" value="F:metal ion binding"/>
    <property type="evidence" value="ECO:0007669"/>
    <property type="project" value="UniProtKB-KW"/>
</dbReference>
<dbReference type="GO" id="GO:0009098">
    <property type="term" value="P:L-leucine biosynthetic process"/>
    <property type="evidence" value="ECO:0007669"/>
    <property type="project" value="UniProtKB-UniPathway"/>
</dbReference>
<dbReference type="CDD" id="cd01583">
    <property type="entry name" value="IPMI"/>
    <property type="match status" value="1"/>
</dbReference>
<dbReference type="CDD" id="cd01577">
    <property type="entry name" value="IPMI_Swivel"/>
    <property type="match status" value="1"/>
</dbReference>
<dbReference type="FunFam" id="3.30.499.10:FF:000006">
    <property type="entry name" value="3-isopropylmalate dehydratase large subunit"/>
    <property type="match status" value="1"/>
</dbReference>
<dbReference type="FunFam" id="3.30.499.10:FF:000007">
    <property type="entry name" value="3-isopropylmalate dehydratase large subunit"/>
    <property type="match status" value="1"/>
</dbReference>
<dbReference type="FunFam" id="3.20.19.10:FF:000003">
    <property type="entry name" value="3-isopropylmalate dehydratase small subunit"/>
    <property type="match status" value="1"/>
</dbReference>
<dbReference type="Gene3D" id="3.30.499.10">
    <property type="entry name" value="Aconitase, domain 3"/>
    <property type="match status" value="2"/>
</dbReference>
<dbReference type="Gene3D" id="3.20.19.10">
    <property type="entry name" value="Aconitase, domain 4"/>
    <property type="match status" value="1"/>
</dbReference>
<dbReference type="HAMAP" id="MF_01026">
    <property type="entry name" value="LeuC_type1"/>
    <property type="match status" value="1"/>
</dbReference>
<dbReference type="HAMAP" id="MF_01031">
    <property type="entry name" value="LeuD_type1"/>
    <property type="match status" value="1"/>
</dbReference>
<dbReference type="InterPro" id="IPR004430">
    <property type="entry name" value="3-IsopropMal_deHydase_lsu"/>
</dbReference>
<dbReference type="InterPro" id="IPR004431">
    <property type="entry name" value="3-IsopropMal_deHydase_ssu"/>
</dbReference>
<dbReference type="InterPro" id="IPR012235">
    <property type="entry name" value="3-IsopropMal_deHydtase_ssu/lsu"/>
</dbReference>
<dbReference type="InterPro" id="IPR015931">
    <property type="entry name" value="Acnase/IPM_dHydase_lsu_aba_1/3"/>
</dbReference>
<dbReference type="InterPro" id="IPR001030">
    <property type="entry name" value="Acoase/IPM_deHydtase_lsu_aba"/>
</dbReference>
<dbReference type="InterPro" id="IPR015928">
    <property type="entry name" value="Aconitase/3IPM_dehydase_swvl"/>
</dbReference>
<dbReference type="InterPro" id="IPR018136">
    <property type="entry name" value="Aconitase_4Fe-4S_BS"/>
</dbReference>
<dbReference type="InterPro" id="IPR036008">
    <property type="entry name" value="Aconitase_4Fe-4S_dom"/>
</dbReference>
<dbReference type="InterPro" id="IPR000573">
    <property type="entry name" value="AconitaseA/IPMdHydase_ssu_swvl"/>
</dbReference>
<dbReference type="InterPro" id="IPR050067">
    <property type="entry name" value="IPM_dehydratase_rel_enz"/>
</dbReference>
<dbReference type="InterPro" id="IPR033941">
    <property type="entry name" value="IPMI_cat"/>
</dbReference>
<dbReference type="InterPro" id="IPR033940">
    <property type="entry name" value="IPMI_Swivel"/>
</dbReference>
<dbReference type="NCBIfam" id="TIGR00170">
    <property type="entry name" value="leuC"/>
    <property type="match status" value="1"/>
</dbReference>
<dbReference type="NCBIfam" id="TIGR00171">
    <property type="entry name" value="leuD"/>
    <property type="match status" value="1"/>
</dbReference>
<dbReference type="NCBIfam" id="NF002458">
    <property type="entry name" value="PRK01641.1"/>
    <property type="match status" value="1"/>
</dbReference>
<dbReference type="NCBIfam" id="NF004016">
    <property type="entry name" value="PRK05478.1"/>
    <property type="match status" value="1"/>
</dbReference>
<dbReference type="NCBIfam" id="NF009116">
    <property type="entry name" value="PRK12466.1"/>
    <property type="match status" value="1"/>
</dbReference>
<dbReference type="PANTHER" id="PTHR43822:SF9">
    <property type="entry name" value="3-ISOPROPYLMALATE DEHYDRATASE"/>
    <property type="match status" value="1"/>
</dbReference>
<dbReference type="PANTHER" id="PTHR43822">
    <property type="entry name" value="HOMOACONITASE, MITOCHONDRIAL-RELATED"/>
    <property type="match status" value="1"/>
</dbReference>
<dbReference type="Pfam" id="PF00330">
    <property type="entry name" value="Aconitase"/>
    <property type="match status" value="1"/>
</dbReference>
<dbReference type="Pfam" id="PF00694">
    <property type="entry name" value="Aconitase_C"/>
    <property type="match status" value="1"/>
</dbReference>
<dbReference type="PIRSF" id="PIRSF001418">
    <property type="entry name" value="ACN"/>
    <property type="match status" value="1"/>
</dbReference>
<dbReference type="PRINTS" id="PR00415">
    <property type="entry name" value="ACONITASE"/>
</dbReference>
<dbReference type="SUPFAM" id="SSF53732">
    <property type="entry name" value="Aconitase iron-sulfur domain"/>
    <property type="match status" value="1"/>
</dbReference>
<dbReference type="SUPFAM" id="SSF52016">
    <property type="entry name" value="LeuD/IlvD-like"/>
    <property type="match status" value="1"/>
</dbReference>
<dbReference type="PROSITE" id="PS00450">
    <property type="entry name" value="ACONITASE_1"/>
    <property type="match status" value="1"/>
</dbReference>
<dbReference type="PROSITE" id="PS01244">
    <property type="entry name" value="ACONITASE_2"/>
    <property type="match status" value="1"/>
</dbReference>
<proteinExistence type="inferred from homology"/>
<name>LEUC_RHIPU</name>
<keyword id="KW-0004">4Fe-4S</keyword>
<keyword id="KW-0028">Amino-acid biosynthesis</keyword>
<keyword id="KW-0100">Branched-chain amino acid biosynthesis</keyword>
<keyword id="KW-0408">Iron</keyword>
<keyword id="KW-0411">Iron-sulfur</keyword>
<keyword id="KW-0432">Leucine biosynthesis</keyword>
<keyword id="KW-0456">Lyase</keyword>
<keyword id="KW-0479">Metal-binding</keyword>
<accession>P55251</accession>
<gene>
    <name type="primary">LEUA</name>
</gene>
<feature type="chain" id="PRO_0000076890" description="3-isopropylmalate dehydratase">
    <location>
        <begin position="1"/>
        <end position="755"/>
    </location>
</feature>
<feature type="region of interest" description="Disordered" evidence="2">
    <location>
        <begin position="427"/>
        <end position="446"/>
    </location>
</feature>
<feature type="region of interest" description="Disordered" evidence="2">
    <location>
        <begin position="471"/>
        <end position="493"/>
    </location>
</feature>
<feature type="region of interest" description="Disordered" evidence="2">
    <location>
        <begin position="510"/>
        <end position="529"/>
    </location>
</feature>
<feature type="compositionally biased region" description="Low complexity" evidence="2">
    <location>
        <begin position="510"/>
        <end position="528"/>
    </location>
</feature>
<feature type="binding site" evidence="1">
    <location>
        <position position="353"/>
    </location>
    <ligand>
        <name>[4Fe-4S] cluster</name>
        <dbReference type="ChEBI" id="CHEBI:49883"/>
    </ligand>
</feature>
<feature type="binding site" evidence="1">
    <location>
        <position position="413"/>
    </location>
    <ligand>
        <name>[4Fe-4S] cluster</name>
        <dbReference type="ChEBI" id="CHEBI:49883"/>
    </ligand>
</feature>
<feature type="binding site" evidence="1">
    <location>
        <position position="416"/>
    </location>
    <ligand>
        <name>[4Fe-4S] cluster</name>
        <dbReference type="ChEBI" id="CHEBI:49883"/>
    </ligand>
</feature>
<organism>
    <name type="scientific">Rhizomucor pusillus</name>
    <dbReference type="NCBI Taxonomy" id="4840"/>
    <lineage>
        <taxon>Eukaryota</taxon>
        <taxon>Fungi</taxon>
        <taxon>Fungi incertae sedis</taxon>
        <taxon>Mucoromycota</taxon>
        <taxon>Mucoromycotina</taxon>
        <taxon>Mucoromycetes</taxon>
        <taxon>Mucorales</taxon>
        <taxon>Lichtheimiaceae</taxon>
        <taxon>Rhizomucor</taxon>
    </lineage>
</organism>